<comment type="function">
    <text evidence="1">Acts as a chaperonin for the core histones H3, H2B and H4. Associated with nucleolar ribonucleoprotein structures and bind single-stranded nucleic acids. It may function in the assembly and/or transport of ribosome. May stimulate endonuclease activity on apurinic/apyrimidinic (AP) double-stranded DNA. May inhibit endonuclease activity on AP single-stranded RNA (By similarity).</text>
</comment>
<comment type="subunit">
    <text evidence="1">Decamer formed by two pentameric rings associated in a head-to-head fashion.</text>
</comment>
<comment type="subcellular location">
    <subcellularLocation>
        <location evidence="1">Cytoplasm</location>
    </subcellularLocation>
    <subcellularLocation>
        <location evidence="1">Nucleus</location>
        <location evidence="1">Nucleoplasm</location>
    </subcellularLocation>
    <subcellularLocation>
        <location evidence="1">Nucleus</location>
        <location evidence="1">Nucleolus</location>
    </subcellularLocation>
    <text evidence="1">Generally nucleolar, but is translocated to the nucleoplasm in case of serum starvation or treatment with anticancer drugs.</text>
</comment>
<comment type="PTM">
    <text>Phosphorylated.</text>
</comment>
<comment type="similarity">
    <text evidence="4">Belongs to the nucleoplasmin family.</text>
</comment>
<proteinExistence type="evidence at transcript level"/>
<gene>
    <name type="primary">NPM1</name>
</gene>
<sequence length="294" mass="32632">MEDSAMDMESMGPLRPQTFLFGCELKAEKEYQFKVDDEENEHQLSLRTVTLGAGAKDELHVVEAEALDYEGNPTKVVLASLKMSVQPTVSLGGFEITPPFVLRLKCGSGPVYVSGQHLVALEEEPESEDEEEDTKIGNASTKRPASGGGAKTPQKKPKLSEDDEDDDEDEDDDEDDEDDLDDDEEEIKTPMKKPAREPAGKNMQKAKQNGKDSKPSTPASKTKTPDSKKDKSLTPKTPKVPLSLEEIKAKMQASVDKGCSLPKLEPKFANYVKNCFRTEDQKVIQALWQWRQTL</sequence>
<organism>
    <name type="scientific">Gallus gallus</name>
    <name type="common">Chicken</name>
    <dbReference type="NCBI Taxonomy" id="9031"/>
    <lineage>
        <taxon>Eukaryota</taxon>
        <taxon>Metazoa</taxon>
        <taxon>Chordata</taxon>
        <taxon>Craniata</taxon>
        <taxon>Vertebrata</taxon>
        <taxon>Euteleostomi</taxon>
        <taxon>Archelosauria</taxon>
        <taxon>Archosauria</taxon>
        <taxon>Dinosauria</taxon>
        <taxon>Saurischia</taxon>
        <taxon>Theropoda</taxon>
        <taxon>Coelurosauria</taxon>
        <taxon>Aves</taxon>
        <taxon>Neognathae</taxon>
        <taxon>Galloanserae</taxon>
        <taxon>Galliformes</taxon>
        <taxon>Phasianidae</taxon>
        <taxon>Phasianinae</taxon>
        <taxon>Gallus</taxon>
    </lineage>
</organism>
<evidence type="ECO:0000250" key="1"/>
<evidence type="ECO:0000255" key="2"/>
<evidence type="ECO:0000256" key="3">
    <source>
        <dbReference type="SAM" id="MobiDB-lite"/>
    </source>
</evidence>
<evidence type="ECO:0000305" key="4"/>
<feature type="chain" id="PRO_0000219484" description="Nucleophosmin">
    <location>
        <begin position="1"/>
        <end position="294"/>
    </location>
</feature>
<feature type="region of interest" description="Disordered" evidence="3">
    <location>
        <begin position="121"/>
        <end position="244"/>
    </location>
</feature>
<feature type="short sequence motif" description="Nuclear localization signal" evidence="2">
    <location>
        <begin position="153"/>
        <end position="158"/>
    </location>
</feature>
<feature type="short sequence motif" description="Nuclear localization signal" evidence="2">
    <location>
        <begin position="190"/>
        <end position="196"/>
    </location>
</feature>
<feature type="compositionally biased region" description="Acidic residues" evidence="3">
    <location>
        <begin position="121"/>
        <end position="133"/>
    </location>
</feature>
<feature type="compositionally biased region" description="Acidic residues" evidence="3">
    <location>
        <begin position="161"/>
        <end position="186"/>
    </location>
</feature>
<feature type="compositionally biased region" description="Basic and acidic residues" evidence="3">
    <location>
        <begin position="223"/>
        <end position="233"/>
    </location>
</feature>
<feature type="site" description="Interaction between pentamers" evidence="1">
    <location>
        <position position="57"/>
    </location>
</feature>
<feature type="site" description="Interaction between pentamers" evidence="1">
    <location>
        <position position="82"/>
    </location>
</feature>
<name>NPM_CHICK</name>
<keyword id="KW-0143">Chaperone</keyword>
<keyword id="KW-0963">Cytoplasm</keyword>
<keyword id="KW-0539">Nucleus</keyword>
<keyword id="KW-0597">Phosphoprotein</keyword>
<keyword id="KW-1185">Reference proteome</keyword>
<keyword id="KW-0694">RNA-binding</keyword>
<dbReference type="EMBL" id="X17200">
    <property type="protein sequence ID" value="CAA35061.1"/>
    <property type="molecule type" value="mRNA"/>
</dbReference>
<dbReference type="PIR" id="S08415">
    <property type="entry name" value="DNCHFM"/>
</dbReference>
<dbReference type="RefSeq" id="NP_990598.1">
    <property type="nucleotide sequence ID" value="NM_205267.1"/>
</dbReference>
<dbReference type="SMR" id="P16039"/>
<dbReference type="BioGRID" id="676463">
    <property type="interactions" value="2"/>
</dbReference>
<dbReference type="FunCoup" id="P16039">
    <property type="interactions" value="2017"/>
</dbReference>
<dbReference type="STRING" id="9031.ENSGALP00000058806"/>
<dbReference type="GlyGen" id="P16039">
    <property type="glycosylation" value="1 site"/>
</dbReference>
<dbReference type="PaxDb" id="9031-ENSGALP00000003431"/>
<dbReference type="GeneID" id="396203"/>
<dbReference type="KEGG" id="gga:396203"/>
<dbReference type="CTD" id="4869"/>
<dbReference type="VEuPathDB" id="HostDB:geneid_396203"/>
<dbReference type="eggNOG" id="KOG0488">
    <property type="taxonomic scope" value="Eukaryota"/>
</dbReference>
<dbReference type="InParanoid" id="P16039"/>
<dbReference type="OrthoDB" id="9946910at2759"/>
<dbReference type="PhylomeDB" id="P16039"/>
<dbReference type="PRO" id="PR:P16039"/>
<dbReference type="Proteomes" id="UP000000539">
    <property type="component" value="Unassembled WGS sequence"/>
</dbReference>
<dbReference type="GO" id="GO:0005813">
    <property type="term" value="C:centrosome"/>
    <property type="evidence" value="ECO:0000250"/>
    <property type="project" value="UniProtKB"/>
</dbReference>
<dbReference type="GO" id="GO:0005737">
    <property type="term" value="C:cytoplasm"/>
    <property type="evidence" value="ECO:0000250"/>
    <property type="project" value="UniProtKB"/>
</dbReference>
<dbReference type="GO" id="GO:0005730">
    <property type="term" value="C:nucleolus"/>
    <property type="evidence" value="ECO:0000318"/>
    <property type="project" value="GO_Central"/>
</dbReference>
<dbReference type="GO" id="GO:0005654">
    <property type="term" value="C:nucleoplasm"/>
    <property type="evidence" value="ECO:0000318"/>
    <property type="project" value="GO_Central"/>
</dbReference>
<dbReference type="GO" id="GO:0005634">
    <property type="term" value="C:nucleus"/>
    <property type="evidence" value="ECO:0000250"/>
    <property type="project" value="UniProtKB"/>
</dbReference>
<dbReference type="GO" id="GO:1990904">
    <property type="term" value="C:ribonucleoprotein complex"/>
    <property type="evidence" value="ECO:0000318"/>
    <property type="project" value="GO_Central"/>
</dbReference>
<dbReference type="GO" id="GO:0003682">
    <property type="term" value="F:chromatin binding"/>
    <property type="evidence" value="ECO:0000318"/>
    <property type="project" value="GO_Central"/>
</dbReference>
<dbReference type="GO" id="GO:0042393">
    <property type="term" value="F:histone binding"/>
    <property type="evidence" value="ECO:0000318"/>
    <property type="project" value="GO_Central"/>
</dbReference>
<dbReference type="GO" id="GO:0051059">
    <property type="term" value="F:NF-kappaB binding"/>
    <property type="evidence" value="ECO:0000250"/>
    <property type="project" value="UniProtKB"/>
</dbReference>
<dbReference type="GO" id="GO:0003723">
    <property type="term" value="F:RNA binding"/>
    <property type="evidence" value="ECO:0000318"/>
    <property type="project" value="GO_Central"/>
</dbReference>
<dbReference type="GO" id="GO:0051082">
    <property type="term" value="F:unfolded protein binding"/>
    <property type="evidence" value="ECO:0000250"/>
    <property type="project" value="UniProtKB"/>
</dbReference>
<dbReference type="GO" id="GO:0090398">
    <property type="term" value="P:cellular senescence"/>
    <property type="evidence" value="ECO:0000250"/>
    <property type="project" value="UniProtKB"/>
</dbReference>
<dbReference type="GO" id="GO:0007098">
    <property type="term" value="P:centrosome cycle"/>
    <property type="evidence" value="ECO:0000250"/>
    <property type="project" value="UniProtKB"/>
</dbReference>
<dbReference type="GO" id="GO:0006338">
    <property type="term" value="P:chromatin remodeling"/>
    <property type="evidence" value="ECO:0000318"/>
    <property type="project" value="GO_Central"/>
</dbReference>
<dbReference type="GO" id="GO:0006281">
    <property type="term" value="P:DNA repair"/>
    <property type="evidence" value="ECO:0000250"/>
    <property type="project" value="UniProtKB"/>
</dbReference>
<dbReference type="GO" id="GO:0008285">
    <property type="term" value="P:negative regulation of cell population proliferation"/>
    <property type="evidence" value="ECO:0000250"/>
    <property type="project" value="UniProtKB"/>
</dbReference>
<dbReference type="GO" id="GO:0045944">
    <property type="term" value="P:positive regulation of transcription by RNA polymerase II"/>
    <property type="evidence" value="ECO:0000318"/>
    <property type="project" value="GO_Central"/>
</dbReference>
<dbReference type="GO" id="GO:0010824">
    <property type="term" value="P:regulation of centrosome duplication"/>
    <property type="evidence" value="ECO:0000318"/>
    <property type="project" value="GO_Central"/>
</dbReference>
<dbReference type="GO" id="GO:0032071">
    <property type="term" value="P:regulation of endodeoxyribonuclease activity"/>
    <property type="evidence" value="ECO:0000250"/>
    <property type="project" value="UniProtKB"/>
</dbReference>
<dbReference type="GO" id="GO:0060699">
    <property type="term" value="P:regulation of endoribonuclease activity"/>
    <property type="evidence" value="ECO:0000250"/>
    <property type="project" value="UniProtKB"/>
</dbReference>
<dbReference type="GO" id="GO:0042273">
    <property type="term" value="P:ribosomal large subunit biogenesis"/>
    <property type="evidence" value="ECO:0000318"/>
    <property type="project" value="GO_Central"/>
</dbReference>
<dbReference type="GO" id="GO:0000055">
    <property type="term" value="P:ribosomal large subunit export from nucleus"/>
    <property type="evidence" value="ECO:0000318"/>
    <property type="project" value="GO_Central"/>
</dbReference>
<dbReference type="GO" id="GO:0042274">
    <property type="term" value="P:ribosomal small subunit biogenesis"/>
    <property type="evidence" value="ECO:0000318"/>
    <property type="project" value="GO_Central"/>
</dbReference>
<dbReference type="GO" id="GO:0000056">
    <property type="term" value="P:ribosomal small subunit export from nucleus"/>
    <property type="evidence" value="ECO:0000318"/>
    <property type="project" value="GO_Central"/>
</dbReference>
<dbReference type="FunFam" id="1.10.10.2100:FF:000001">
    <property type="entry name" value="Nucleophosmin 1"/>
    <property type="match status" value="1"/>
</dbReference>
<dbReference type="FunFam" id="2.60.120.340:FF:000001">
    <property type="entry name" value="Nucleophosmin 1"/>
    <property type="match status" value="1"/>
</dbReference>
<dbReference type="Gene3D" id="1.10.10.2100">
    <property type="match status" value="1"/>
</dbReference>
<dbReference type="Gene3D" id="2.60.120.340">
    <property type="entry name" value="Nucleoplasmin core domain"/>
    <property type="match status" value="1"/>
</dbReference>
<dbReference type="InterPro" id="IPR032569">
    <property type="entry name" value="NPM1_C"/>
</dbReference>
<dbReference type="InterPro" id="IPR004301">
    <property type="entry name" value="Nucleoplasmin"/>
</dbReference>
<dbReference type="InterPro" id="IPR024057">
    <property type="entry name" value="Nucleoplasmin_core_dom"/>
</dbReference>
<dbReference type="InterPro" id="IPR036824">
    <property type="entry name" value="Nucleoplasmin_core_dom_sf"/>
</dbReference>
<dbReference type="PANTHER" id="PTHR22747:SF28">
    <property type="entry name" value="NUCLEOPHOSMIN"/>
    <property type="match status" value="1"/>
</dbReference>
<dbReference type="PANTHER" id="PTHR22747">
    <property type="entry name" value="NUCLEOPLASMIN"/>
    <property type="match status" value="1"/>
</dbReference>
<dbReference type="Pfam" id="PF16276">
    <property type="entry name" value="NPM1-C"/>
    <property type="match status" value="1"/>
</dbReference>
<dbReference type="Pfam" id="PF03066">
    <property type="entry name" value="Nucleoplasmin"/>
    <property type="match status" value="1"/>
</dbReference>
<dbReference type="SUPFAM" id="SSF69203">
    <property type="entry name" value="Nucleoplasmin-like core domain"/>
    <property type="match status" value="1"/>
</dbReference>
<protein>
    <recommendedName>
        <fullName>Nucleophosmin</fullName>
        <shortName>NPM</shortName>
    </recommendedName>
    <alternativeName>
        <fullName>Nucleolar phosphoprotein B23</fullName>
    </alternativeName>
    <alternativeName>
        <fullName>Nucleolar protein NO38</fullName>
    </alternativeName>
    <alternativeName>
        <fullName>Numatrin</fullName>
    </alternativeName>
</protein>
<accession>P16039</accession>
<reference key="1">
    <citation type="journal article" date="1990" name="Nucleic Acids Res.">
        <title>cDNA sequences of chicken nucleolin/C23 and NO38/B23, two major nucleolar proteins.</title>
        <authorList>
            <person name="Maridor G."/>
            <person name="Nigg E.A."/>
        </authorList>
    </citation>
    <scope>NUCLEOTIDE SEQUENCE [MRNA]</scope>
</reference>
<reference key="2">
    <citation type="journal article" date="1990" name="Biochim. Biophys. Acta">
        <title>Structure and developmental expression of chicken nucleolin and NO38: coordinate expression of two abundant non-ribosomal nucleolar proteins.</title>
        <authorList>
            <person name="Maridor G."/>
            <person name="Krek W."/>
            <person name="Nigg E.A."/>
        </authorList>
    </citation>
    <scope>DISCUSSION OF SEQUENCE</scope>
</reference>
<reference key="3">
    <citation type="journal article" date="1989" name="Cell">
        <title>Major nucleolar proteins shuttle between nucleus and cytoplasm.</title>
        <authorList>
            <person name="Borer R.A."/>
            <person name="Lehner C.F."/>
            <person name="Eppenberger H.M."/>
            <person name="Nigg E.A."/>
        </authorList>
    </citation>
    <scope>SUBCELLULAR LOCATION</scope>
</reference>